<proteinExistence type="evidence at protein level"/>
<feature type="chain" id="PRO_0000191755" description="Anoctamin-5">
    <location>
        <begin position="1"/>
        <end position="913"/>
    </location>
</feature>
<feature type="topological domain" description="Cytoplasmic" evidence="1">
    <location>
        <begin position="1"/>
        <end position="299"/>
    </location>
</feature>
<feature type="transmembrane region" description="Helical" evidence="1">
    <location>
        <begin position="300"/>
        <end position="320"/>
    </location>
</feature>
<feature type="topological domain" description="Extracellular" evidence="1">
    <location>
        <begin position="321"/>
        <end position="380"/>
    </location>
</feature>
<feature type="transmembrane region" description="Helical" evidence="1">
    <location>
        <begin position="381"/>
        <end position="401"/>
    </location>
</feature>
<feature type="topological domain" description="Cytoplasmic" evidence="1">
    <location>
        <begin position="402"/>
        <end position="462"/>
    </location>
</feature>
<feature type="transmembrane region" description="Helical" evidence="1">
    <location>
        <begin position="463"/>
        <end position="483"/>
    </location>
</feature>
<feature type="topological domain" description="Extracellular" evidence="1">
    <location>
        <begin position="484"/>
        <end position="511"/>
    </location>
</feature>
<feature type="transmembrane region" description="Helical" evidence="1">
    <location>
        <begin position="512"/>
        <end position="532"/>
    </location>
</feature>
<feature type="topological domain" description="Cytoplasmic" evidence="1">
    <location>
        <begin position="533"/>
        <end position="557"/>
    </location>
</feature>
<feature type="transmembrane region" description="Helical" evidence="1">
    <location>
        <begin position="558"/>
        <end position="578"/>
    </location>
</feature>
<feature type="topological domain" description="Extracellular" evidence="1">
    <location>
        <begin position="579"/>
        <end position="679"/>
    </location>
</feature>
<feature type="transmembrane region" description="Helical" evidence="1">
    <location>
        <begin position="680"/>
        <end position="700"/>
    </location>
</feature>
<feature type="topological domain" description="Cytoplasmic" evidence="1">
    <location>
        <begin position="701"/>
        <end position="732"/>
    </location>
</feature>
<feature type="transmembrane region" description="Helical" evidence="1">
    <location>
        <begin position="733"/>
        <end position="753"/>
    </location>
</feature>
<feature type="topological domain" description="Extracellular" evidence="1">
    <location>
        <begin position="754"/>
        <end position="834"/>
    </location>
</feature>
<feature type="transmembrane region" description="Helical" evidence="1">
    <location>
        <begin position="835"/>
        <end position="855"/>
    </location>
</feature>
<feature type="topological domain" description="Cytoplasmic" evidence="1">
    <location>
        <begin position="856"/>
        <end position="913"/>
    </location>
</feature>
<feature type="glycosylation site" description="N-linked (GlcNAc...) asparagine" evidence="1">
    <location>
        <position position="335"/>
    </location>
</feature>
<feature type="glycosylation site" description="N-linked (GlcNAc...) asparagine" evidence="1">
    <location>
        <position position="366"/>
    </location>
</feature>
<feature type="glycosylation site" description="N-linked (GlcNAc...) asparagine" evidence="1">
    <location>
        <position position="380"/>
    </location>
</feature>
<feature type="glycosylation site" description="N-linked (GlcNAc...) asparagine" evidence="1">
    <location>
        <position position="768"/>
    </location>
</feature>
<feature type="glycosylation site" description="N-linked (GlcNAc...) asparagine" evidence="1">
    <location>
        <position position="778"/>
    </location>
</feature>
<feature type="glycosylation site" description="N-linked (GlcNAc...) asparagine" evidence="1">
    <location>
        <position position="791"/>
    </location>
</feature>
<feature type="sequence variant" id="VAR_080271" description="In LGMDR12; uncertain significance; dbSNP:rs143777403." evidence="11">
    <original>N</original>
    <variation>S</variation>
    <location>
        <position position="52"/>
    </location>
</feature>
<feature type="sequence variant" id="VAR_080272" description="In LGMDR12; uncertain significance; dbSNP:rs886043577." evidence="11">
    <original>F</original>
    <variation>S</variation>
    <location>
        <position position="54"/>
    </location>
</feature>
<feature type="sequence variant" id="VAR_068247" description="In LGMDR12; pathogenic; results in defective sarcolemma repair in cultured muscle cells; dbSNP:rs201725369." evidence="7 10 11 13 14">
    <original>R</original>
    <variation>W</variation>
    <location>
        <position position="58"/>
    </location>
</feature>
<feature type="sequence variant" id="VAR_080273" description="In LGMDR12; uncertain significance; dbSNP:rs34994927." evidence="11">
    <original>V</original>
    <variation>I</variation>
    <location>
        <position position="87"/>
    </location>
</feature>
<feature type="sequence variant" id="VAR_080274" description="In LGMDR12; uncertain significance." evidence="11">
    <original>D</original>
    <variation>E</variation>
    <location>
        <position position="93"/>
    </location>
</feature>
<feature type="sequence variant" id="VAR_080275" description="In LGMDR12; uncertain significance." evidence="11">
    <original>Y</original>
    <variation>C</variation>
    <location>
        <position position="143"/>
    </location>
</feature>
<feature type="sequence variant" id="VAR_080276" description="In LGMDR12; uncertain significance; dbSNP:rs115750596." evidence="11">
    <original>E</original>
    <variation>K</variation>
    <location>
        <position position="202"/>
    </location>
</feature>
<feature type="sequence variant" id="VAR_080277" description="In LGMDR12; uncertain significance; dbSNP:rs78266558." evidence="11">
    <original>T</original>
    <variation>A</variation>
    <location>
        <position position="206"/>
    </location>
</feature>
<feature type="sequence variant" id="VAR_063582" description="In LGMDR12; dbSNP:rs137854523." evidence="5 11 13">
    <original>G</original>
    <variation>V</variation>
    <location>
        <position position="231"/>
    </location>
</feature>
<feature type="sequence variant" id="VAR_080278" description="In LGMDR12; uncertain significance." evidence="11">
    <original>K</original>
    <variation>N</variation>
    <location>
        <position position="259"/>
    </location>
</feature>
<feature type="sequence variant" id="VAR_080279" description="In LGMDR12; uncertain significance; dbSNP:rs377553546." evidence="11">
    <original>N</original>
    <variation>S</variation>
    <location>
        <position position="265"/>
    </location>
</feature>
<feature type="sequence variant" id="VAR_080280" description="In LGMDR12; uncertain significance; dbSNP:rs745908606." evidence="11">
    <original>P</original>
    <variation>L</variation>
    <location>
        <position position="266"/>
    </location>
</feature>
<feature type="sequence variant" id="VAR_080281" description="In LGMDR12; uncertain significance; dbSNP:rs138144479." evidence="11">
    <original>T</original>
    <variation>S</variation>
    <location>
        <position position="267"/>
    </location>
</feature>
<feature type="sequence variant" id="VAR_052339" description="In dbSNP:rs7481951.">
    <original>L</original>
    <variation>F</variation>
    <location>
        <position position="322"/>
    </location>
</feature>
<feature type="sequence variant" id="VAR_023524" description="In GDD; dbSNP:rs119103234." evidence="3">
    <original>C</original>
    <variation>G</variation>
    <location>
        <position position="356"/>
    </location>
</feature>
<feature type="sequence variant" id="VAR_023525" description="In GDD; dbSNP:rs119103234." evidence="3">
    <original>C</original>
    <variation>R</variation>
    <location>
        <position position="356"/>
    </location>
</feature>
<feature type="sequence variant" id="VAR_076476" description="In GDD." evidence="12">
    <original>C</original>
    <variation>Y</variation>
    <location>
        <position position="356"/>
    </location>
</feature>
<feature type="sequence variant" id="VAR_080282" description="In LGMDR12; uncertain significance." evidence="11">
    <original>R</original>
    <variation>L</variation>
    <location>
        <position position="404"/>
    </location>
</feature>
<feature type="sequence variant" id="VAR_080301" description="In LGMDR12." evidence="11">
    <location>
        <begin position="405"/>
        <end position="913"/>
    </location>
</feature>
<feature type="sequence variant" id="VAR_080283" description="In LGMDR12." evidence="11">
    <location>
        <begin position="421"/>
        <end position="913"/>
    </location>
</feature>
<feature type="sequence variant" id="VAR_080284" description="In LGMDR12; uncertain significance; dbSNP:rs141799673." evidence="11">
    <original>S</original>
    <variation>G</variation>
    <location>
        <position position="506"/>
    </location>
</feature>
<feature type="sequence variant" id="VAR_076477" description="In GDD; uncertain significance; dbSNP:rs281865467." evidence="9">
    <original>T</original>
    <variation>I</variation>
    <location>
        <position position="513"/>
    </location>
</feature>
<feature type="sequence variant" id="VAR_080285" description="In LGMDR12; uncertain significance." evidence="11">
    <location>
        <begin position="547"/>
        <end position="913"/>
    </location>
</feature>
<feature type="sequence variant" id="VAR_080286" description="In LGMDR12; uncertain significance; dbSNP:rs139618850." evidence="11">
    <original>R</original>
    <variation>Q</variation>
    <location>
        <position position="547"/>
    </location>
</feature>
<feature type="sequence variant" id="VAR_080287" description="In LGMDR12; uncertain significance; dbSNP:rs375014127." evidence="11">
    <original>S</original>
    <variation>I</variation>
    <location>
        <position position="555"/>
    </location>
</feature>
<feature type="sequence variant" id="VAR_080288" description="In LGMDR12; uncertain significance; dbSNP:rs137854526." evidence="11">
    <original>F</original>
    <variation>S</variation>
    <location>
        <position position="578"/>
    </location>
</feature>
<feature type="sequence variant" id="VAR_080289" description="In LGMDR12; uncertain significance; dbSNP:rs1422717390." evidence="11">
    <original>M</original>
    <variation>I</variation>
    <location>
        <position position="618"/>
    </location>
</feature>
<feature type="sequence variant" id="VAR_068248" description="In MMD3; uncertain significance; dbSNP:rs760137559." evidence="7">
    <original>W</original>
    <variation>C</variation>
    <location>
        <position position="655"/>
    </location>
</feature>
<feature type="sequence variant" id="VAR_080290" description="In LGMDR12; uncertain significance." evidence="11">
    <location>
        <position position="701"/>
    </location>
</feature>
<feature type="sequence variant" id="VAR_080291" description="In LGMDR12; uncertain significance; dbSNP:rs200631556." evidence="11">
    <original>T</original>
    <variation>S</variation>
    <location>
        <position position="714"/>
    </location>
</feature>
<feature type="sequence variant" id="VAR_063583" description="In MMD3 and LGMDR12; uncertain significance; dbSNP:rs137854529." evidence="5 11">
    <original>R</original>
    <variation>C</variation>
    <location>
        <position position="758"/>
    </location>
</feature>
<feature type="sequence variant" id="VAR_080292" description="In LGMDR12; uncertain significance." evidence="11">
    <original>L</original>
    <variation>P</variation>
    <location>
        <position position="781"/>
    </location>
</feature>
<feature type="sequence variant" id="VAR_080293" description="In LGMDR12; uncertain significance; dbSNP:rs61910685." evidence="11">
    <original>S</original>
    <variation>L</variation>
    <location>
        <position position="796"/>
    </location>
</feature>
<feature type="sequence variant" id="VAR_080294" description="In LGMDR12; uncertain significance; dbSNP:rs1233836740." evidence="11">
    <original>C</original>
    <variation>S</variation>
    <location>
        <position position="804"/>
    </location>
</feature>
<feature type="sequence variant" id="VAR_080295" description="In LGMDR12; uncertain significance; dbSNP:rs766853141." evidence="11">
    <original>A</original>
    <variation>V</variation>
    <location>
        <position position="830"/>
    </location>
</feature>
<feature type="sequence variant" id="VAR_080296" description="In LGMDR12; uncertain significance; dbSNP:rs142073798." evidence="11">
    <original>M</original>
    <variation>K</variation>
    <location>
        <position position="833"/>
    </location>
</feature>
<feature type="sequence variant" id="VAR_080297" description="In LGMDR12; uncertain significance; dbSNP:rs150442899." evidence="11">
    <original>M</original>
    <variation>R</variation>
    <location>
        <position position="839"/>
    </location>
</feature>
<feature type="sequence variant" id="VAR_052340" description="In dbSNP:rs34969327.">
    <original>N</original>
    <variation>K</variation>
    <location>
        <position position="882"/>
    </location>
</feature>
<feature type="sequence variant" id="VAR_080298" description="In LGMDR12; uncertain significance; dbSNP:rs148293985." evidence="11">
    <original>M</original>
    <variation>L</variation>
    <location>
        <position position="900"/>
    </location>
</feature>
<dbReference type="EMBL" id="AB125267">
    <property type="protein sequence ID" value="BAD17859.1"/>
    <property type="molecule type" value="mRNA"/>
</dbReference>
<dbReference type="CCDS" id="CCDS31444.1"/>
<dbReference type="RefSeq" id="NP_001136121.1">
    <property type="nucleotide sequence ID" value="NM_001142649.1"/>
</dbReference>
<dbReference type="RefSeq" id="NP_998764.1">
    <property type="nucleotide sequence ID" value="NM_213599.3"/>
</dbReference>
<dbReference type="SMR" id="Q75V66"/>
<dbReference type="BioGRID" id="128482">
    <property type="interactions" value="14"/>
</dbReference>
<dbReference type="FunCoup" id="Q75V66">
    <property type="interactions" value="674"/>
</dbReference>
<dbReference type="IntAct" id="Q75V66">
    <property type="interactions" value="8"/>
</dbReference>
<dbReference type="STRING" id="9606.ENSP00000315371"/>
<dbReference type="TCDB" id="1.A.17.1.21">
    <property type="family name" value="the calcium-dependent chloride channel (ca-clc) family"/>
</dbReference>
<dbReference type="GlyCosmos" id="Q75V66">
    <property type="glycosylation" value="6 sites, No reported glycans"/>
</dbReference>
<dbReference type="GlyGen" id="Q75V66">
    <property type="glycosylation" value="6 sites, 1 N-linked glycan (1 site)"/>
</dbReference>
<dbReference type="iPTMnet" id="Q75V66"/>
<dbReference type="PhosphoSitePlus" id="Q75V66"/>
<dbReference type="BioMuta" id="ANO5"/>
<dbReference type="DMDM" id="74749827"/>
<dbReference type="jPOST" id="Q75V66"/>
<dbReference type="MassIVE" id="Q75V66"/>
<dbReference type="PaxDb" id="9606-ENSP00000315371"/>
<dbReference type="PeptideAtlas" id="Q75V66"/>
<dbReference type="ProteomicsDB" id="68653"/>
<dbReference type="ABCD" id="Q75V66">
    <property type="antibodies" value="1 sequenced antibody"/>
</dbReference>
<dbReference type="Antibodypedia" id="53749">
    <property type="antibodies" value="83 antibodies from 18 providers"/>
</dbReference>
<dbReference type="DNASU" id="203859"/>
<dbReference type="Ensembl" id="ENST00000324559.9">
    <property type="protein sequence ID" value="ENSP00000315371.9"/>
    <property type="gene ID" value="ENSG00000171714.13"/>
</dbReference>
<dbReference type="GeneID" id="203859"/>
<dbReference type="KEGG" id="hsa:203859"/>
<dbReference type="MANE-Select" id="ENST00000324559.9">
    <property type="protein sequence ID" value="ENSP00000315371.9"/>
    <property type="RefSeq nucleotide sequence ID" value="NM_213599.3"/>
    <property type="RefSeq protein sequence ID" value="NP_998764.1"/>
</dbReference>
<dbReference type="UCSC" id="uc001mqi.3">
    <property type="organism name" value="human"/>
</dbReference>
<dbReference type="AGR" id="HGNC:27337"/>
<dbReference type="CTD" id="203859"/>
<dbReference type="DisGeNET" id="203859"/>
<dbReference type="GeneCards" id="ANO5"/>
<dbReference type="GeneReviews" id="ANO5"/>
<dbReference type="HGNC" id="HGNC:27337">
    <property type="gene designation" value="ANO5"/>
</dbReference>
<dbReference type="HPA" id="ENSG00000171714">
    <property type="expression patterns" value="Group enriched (heart muscle, parathyroid gland, skeletal muscle, tongue)"/>
</dbReference>
<dbReference type="MalaCards" id="ANO5"/>
<dbReference type="MIM" id="166260">
    <property type="type" value="phenotype"/>
</dbReference>
<dbReference type="MIM" id="608662">
    <property type="type" value="gene"/>
</dbReference>
<dbReference type="MIM" id="611307">
    <property type="type" value="phenotype"/>
</dbReference>
<dbReference type="MIM" id="613319">
    <property type="type" value="phenotype"/>
</dbReference>
<dbReference type="neXtProt" id="NX_Q75V66"/>
<dbReference type="OpenTargets" id="ENSG00000171714"/>
<dbReference type="Orphanet" id="206549">
    <property type="disease" value="Anoctamin-5-related limb-girdle muscular dystrophy R12"/>
</dbReference>
<dbReference type="Orphanet" id="689021">
    <property type="disease" value="Asymptomatic hyperCKemia-myalgia-rhabdomyolysis syndrome"/>
</dbReference>
<dbReference type="Orphanet" id="399096">
    <property type="disease" value="Distal anoctaminopathy"/>
</dbReference>
<dbReference type="Orphanet" id="53697">
    <property type="disease" value="Gnathodiaphyseal dysplasia"/>
</dbReference>
<dbReference type="Orphanet" id="206599">
    <property type="disease" value="Isolated asymptomatic elevation of creatine phosphokinase"/>
</dbReference>
<dbReference type="PharmGKB" id="PA164715641"/>
<dbReference type="VEuPathDB" id="HostDB:ENSG00000171714"/>
<dbReference type="eggNOG" id="KOG2514">
    <property type="taxonomic scope" value="Eukaryota"/>
</dbReference>
<dbReference type="GeneTree" id="ENSGT00940000155692"/>
<dbReference type="HOGENOM" id="CLU_006685_1_4_1"/>
<dbReference type="InParanoid" id="Q75V66"/>
<dbReference type="OMA" id="LRNVQYW"/>
<dbReference type="OrthoDB" id="296386at2759"/>
<dbReference type="PAN-GO" id="Q75V66">
    <property type="GO annotations" value="3 GO annotations based on evolutionary models"/>
</dbReference>
<dbReference type="PhylomeDB" id="Q75V66"/>
<dbReference type="TreeFam" id="TF314265"/>
<dbReference type="PathwayCommons" id="Q75V66"/>
<dbReference type="Reactome" id="R-HSA-2672351">
    <property type="pathway name" value="Stimuli-sensing channels"/>
</dbReference>
<dbReference type="Reactome" id="R-HSA-9733458">
    <property type="pathway name" value="Induction of Cell-Cell Fusion"/>
</dbReference>
<dbReference type="SignaLink" id="Q75V66"/>
<dbReference type="BioGRID-ORCS" id="203859">
    <property type="hits" value="8 hits in 1151 CRISPR screens"/>
</dbReference>
<dbReference type="ChiTaRS" id="ANO5">
    <property type="organism name" value="human"/>
</dbReference>
<dbReference type="GenomeRNAi" id="203859"/>
<dbReference type="Pharos" id="Q75V66">
    <property type="development level" value="Tbio"/>
</dbReference>
<dbReference type="PRO" id="PR:Q75V66"/>
<dbReference type="Proteomes" id="UP000005640">
    <property type="component" value="Chromosome 11"/>
</dbReference>
<dbReference type="RNAct" id="Q75V66">
    <property type="molecule type" value="protein"/>
</dbReference>
<dbReference type="Bgee" id="ENSG00000171714">
    <property type="expression patterns" value="Expressed in cardiac muscle of right atrium and 167 other cell types or tissues"/>
</dbReference>
<dbReference type="GO" id="GO:0005789">
    <property type="term" value="C:endoplasmic reticulum membrane"/>
    <property type="evidence" value="ECO:0007669"/>
    <property type="project" value="UniProtKB-SubCell"/>
</dbReference>
<dbReference type="GO" id="GO:0005886">
    <property type="term" value="C:plasma membrane"/>
    <property type="evidence" value="ECO:0000314"/>
    <property type="project" value="UniProtKB"/>
</dbReference>
<dbReference type="GO" id="GO:0031982">
    <property type="term" value="C:vesicle"/>
    <property type="evidence" value="ECO:0007669"/>
    <property type="project" value="Ensembl"/>
</dbReference>
<dbReference type="GO" id="GO:0005254">
    <property type="term" value="F:chloride channel activity"/>
    <property type="evidence" value="ECO:0000318"/>
    <property type="project" value="GO_Central"/>
</dbReference>
<dbReference type="GO" id="GO:0005229">
    <property type="term" value="F:intracellularly calcium-gated chloride channel activity"/>
    <property type="evidence" value="ECO:0000314"/>
    <property type="project" value="UniProtKB"/>
</dbReference>
<dbReference type="GO" id="GO:0046983">
    <property type="term" value="F:protein dimerization activity"/>
    <property type="evidence" value="ECO:0007669"/>
    <property type="project" value="InterPro"/>
</dbReference>
<dbReference type="GO" id="GO:1902476">
    <property type="term" value="P:chloride transmembrane transport"/>
    <property type="evidence" value="ECO:0000314"/>
    <property type="project" value="UniProtKB"/>
</dbReference>
<dbReference type="GO" id="GO:0034220">
    <property type="term" value="P:monoatomic ion transmembrane transport"/>
    <property type="evidence" value="ECO:0000304"/>
    <property type="project" value="Reactome"/>
</dbReference>
<dbReference type="GO" id="GO:0001778">
    <property type="term" value="P:plasma membrane repair"/>
    <property type="evidence" value="ECO:0000315"/>
    <property type="project" value="UniProtKB"/>
</dbReference>
<dbReference type="InterPro" id="IPR032394">
    <property type="entry name" value="Anoct_dimer"/>
</dbReference>
<dbReference type="InterPro" id="IPR007632">
    <property type="entry name" value="Anoctamin"/>
</dbReference>
<dbReference type="InterPro" id="IPR049452">
    <property type="entry name" value="Anoctamin_TM"/>
</dbReference>
<dbReference type="PANTHER" id="PTHR12308">
    <property type="entry name" value="ANOCTAMIN"/>
    <property type="match status" value="1"/>
</dbReference>
<dbReference type="PANTHER" id="PTHR12308:SF23">
    <property type="entry name" value="ANOCTAMIN-5"/>
    <property type="match status" value="1"/>
</dbReference>
<dbReference type="Pfam" id="PF16178">
    <property type="entry name" value="Anoct_dimer"/>
    <property type="match status" value="1"/>
</dbReference>
<dbReference type="Pfam" id="PF04547">
    <property type="entry name" value="Anoctamin"/>
    <property type="match status" value="1"/>
</dbReference>
<name>ANO5_HUMAN</name>
<sequence length="913" mass="107188">MGDPDLLEVLAEEGEKVNKHIDYSFQMSEQSLSSRETSFLINEETMPAKRFNLFLRRRLMFQKNQQSKDSIFFRDGIRQIDFVLSYVDDVKKDAELKAERRKEFETNLRKTGLELEIEDKRDSEDGRTYFVKIHAPWEVLVTYAEVLGIKMPIKESDIPRPKHTPISYVLGPVRLPLSVKYPHPEYFTAQFSRHRQELFLIEDQATFFPSSSRNRIVYYILSRCPFGIEDGKKRFGIERLLNSNTYSSAYPLHDGQYWKPSEPPNPTNERYTLHQNWARFSYFYKEQPLDLIKNYYGEKIGIYFVFLGFYTEMLFFAAVVGLACFIYGLLSMEHNTSSTEICDPEIGGQMIMCPLCDQVCDYWRLNSTCLASKFSHLFDNESTVFFAIFMGIWVTLFLEFWKQRQARLEYEWDLVDFEEEQQQLQLRPEFEAMCKHRKLNAVTKEMEPYMPLYTRIPWYFLSGATVTLWMSLVVTSMVAVIVYRLSVFATFASFMESDASLKQVKSFLTPQITTSLTGSCLNFIVILILNFFYEKISAWITKMEIPRTYQEYESSLTLKMFLFQFVNFYSSCFYVAFFKGKFVGYPGKYTYLFNEWRSEECDPGGCLIELTTQLTIIMTGKQIFGNIKEAIYPLALNWWRRRKARTNSEKLYSRWEQDHDLESFGPLGLFYEYLETVTQFGFVTLFVASFPLAPLLALINNIVEIRVDAWKLTTQYRRTVASKAHSIGVWQDILYGMAVLSVATNAFIVAFTSDIIPRLVYYYAYSTNATQPMTGYVNNSLSVFLIADFPNHTAPSEKRDFITCRYRDYRYPPDDENKYFHNMQFWHVLAAKMTFIIVMEHVVFLVKFLLAWMIPDVPKDVVERIKREKLMTIKILHDFELNKLKENLGINSNEFAKHVMIEENKAQLAKSTL</sequence>
<reference key="1">
    <citation type="journal article" date="2004" name="Am. J. Hum. Genet.">
        <title>The novel gene encoding a putative transmembrane protein is mutated in gnathodiaphyseal dysplasia (GDD).</title>
        <authorList>
            <person name="Tsutsumi S."/>
            <person name="Kamata N."/>
            <person name="Vokes T.J."/>
            <person name="Maruoka Y."/>
            <person name="Nakakuki K."/>
            <person name="Enomoto S."/>
            <person name="Omura K."/>
            <person name="Amagasa T."/>
            <person name="Nagayama M."/>
            <person name="Saito-Ohara F."/>
            <person name="Inazawa J."/>
            <person name="Moritani M."/>
            <person name="Yamaoka T."/>
            <person name="Inoue H."/>
            <person name="Itakura M."/>
        </authorList>
    </citation>
    <scope>NUCLEOTIDE SEQUENCE [MRNA]</scope>
    <scope>TISSUE SPECIFICITY</scope>
    <scope>SUBCELLULAR LOCATION</scope>
    <scope>VARIANTS GDD GLY-356 AND ARG-356</scope>
    <source>
        <tissue>Skeletal muscle</tissue>
    </source>
</reference>
<reference key="2">
    <citation type="journal article" date="2004" name="Int. J. Oncol.">
        <title>Identification and characterization of TMEM16E and TMEM16F genes in silico.</title>
        <authorList>
            <person name="Katoh M."/>
            <person name="Katoh M."/>
        </authorList>
    </citation>
    <scope>TISSUE SPECIFICITY</scope>
</reference>
<reference key="3">
    <citation type="journal article" date="2010" name="J. Biol. Chem.">
        <title>Expression and function of epithelial anoctamins.</title>
        <authorList>
            <person name="Schreiber R."/>
            <person name="Uliyakina I."/>
            <person name="Kongsuphol P."/>
            <person name="Warth R."/>
            <person name="Mirza M."/>
            <person name="Martins J.R."/>
            <person name="Kunzelmann K."/>
        </authorList>
    </citation>
    <scope>ABSENCE OF CALCIUM-ACTIVATED CHLORIDE CHANNEL ACTIVITY</scope>
    <scope>SUBCELLULAR LOCATION</scope>
</reference>
<reference key="4">
    <citation type="journal article" date="2011" name="Acta Pharmacol. Sin.">
        <title>Physiological roles and diseases of Tmem16/Anoctamin proteins: are they all chloride channels?</title>
        <authorList>
            <person name="Duran C."/>
            <person name="Hartzell H.C."/>
        </authorList>
    </citation>
    <scope>REVIEW</scope>
</reference>
<reference key="5">
    <citation type="journal article" date="2011" name="Pflugers Arch.">
        <title>Anoctamins.</title>
        <authorList>
            <person name="Kunzelmann K."/>
            <person name="Tian Y."/>
            <person name="Martins J.R."/>
            <person name="Faria D."/>
            <person name="Kongsuphol P."/>
            <person name="Ousingsawat J."/>
            <person name="Thevenod F."/>
            <person name="Roussa E."/>
            <person name="Rock J."/>
            <person name="Schreiber R."/>
        </authorList>
    </citation>
    <scope>REVIEW</scope>
</reference>
<reference key="6">
    <citation type="journal article" date="2012" name="Am. J. Physiol.">
        <title>ANOs 3-7 in the anoctamin/Tmem16 Cl- channel family are intracellular proteins.</title>
        <authorList>
            <person name="Duran C."/>
            <person name="Qu Z."/>
            <person name="Osunkoya A.O."/>
            <person name="Cui Y."/>
            <person name="Hartzell H.C."/>
        </authorList>
    </citation>
    <scope>ABSENCE OF CALCIUM-ACTIVATED CHLORIDE CHANNEL ACTIVITY</scope>
    <scope>SUBCELLULAR LOCATION</scope>
</reference>
<reference key="7">
    <citation type="journal article" date="2012" name="Exp. Physiol.">
        <title>The anoctamin (TMEM16) gene family: calcium-activated chloride channels come of age.</title>
        <authorList>
            <person name="Winpenny J.P."/>
            <person name="Gray M.A."/>
        </authorList>
    </citation>
    <scope>REVIEW</scope>
</reference>
<reference key="8">
    <citation type="journal article" date="2012" name="J. Cell Sci.">
        <title>Anoctamins are a family of Ca2+ activated Cl- channels.</title>
        <authorList>
            <person name="Tian Y."/>
            <person name="Schreiber R."/>
            <person name="Kunzelmann K."/>
        </authorList>
    </citation>
    <scope>SUBCELLULAR LOCATION</scope>
</reference>
<reference key="9">
    <citation type="journal article" date="2010" name="Am. J. Hum. Genet.">
        <title>Recessive mutations in the putative calcium-activated chloride channel Anoctamin 5 cause proximal LGMD2L and distal MMD3 muscular dystrophies.</title>
        <authorList>
            <person name="Bolduc V."/>
            <person name="Marlow G."/>
            <person name="Boycott K.M."/>
            <person name="Saleki K."/>
            <person name="Inoue H."/>
            <person name="Kroon J."/>
            <person name="Itakura M."/>
            <person name="Robitaille Y."/>
            <person name="Parent L."/>
            <person name="Baas F."/>
            <person name="Mizuta K."/>
            <person name="Kamata N."/>
            <person name="Richard I."/>
            <person name="Linssen W.H."/>
            <person name="Mahjneh I."/>
            <person name="de Visser M."/>
            <person name="Bashir R."/>
            <person name="Brais B."/>
        </authorList>
    </citation>
    <scope>VARIANT LGMDR12 VAL-231</scope>
    <scope>VARIANT MMD3 CYS-758</scope>
</reference>
<reference key="10">
    <citation type="journal article" date="2012" name="Muscle Nerve">
        <title>Novel ANO5 mutations causing hyper-CK-emia, limb girdle muscular weakness and Miyoshi type of muscular dystrophy.</title>
        <authorList>
            <person name="Schessl J."/>
            <person name="Kress W."/>
            <person name="Schoser B."/>
        </authorList>
    </citation>
    <scope>VARIANT LGMDR12 TRP-58</scope>
    <scope>VARIANT MMD3 CYS-655</scope>
</reference>
<reference key="11">
    <citation type="journal article" date="2013" name="Eur. J. Hum. Genet.">
        <title>A novel missense mutation in ANO5/TMEM16E is causative for gnathodiaphyseal dyplasia in a large Italian pedigree.</title>
        <authorList>
            <person name="Marconi C."/>
            <person name="Brunamonti Binello P."/>
            <person name="Badiali G."/>
            <person name="Caci E."/>
            <person name="Cusano R."/>
            <person name="Garibaldi J."/>
            <person name="Pippucci T."/>
            <person name="Merlini A."/>
            <person name="Marchetti C."/>
            <person name="Rhoden K.J."/>
            <person name="Galietta L.J."/>
            <person name="Lalatta F."/>
            <person name="Balbi P."/>
            <person name="Seri M."/>
        </authorList>
    </citation>
    <scope>VARIANT GDD ILE-513</scope>
    <scope>FUNCTION</scope>
</reference>
<reference key="12">
    <citation type="journal article" date="2015" name="Neuromuscul. Disord.">
        <title>Next generation sequencing on patients with LGMD and nonspecific myopathies: Findings associated with ANO5 mutations.</title>
        <authorList>
            <person name="Savarese M."/>
            <person name="Di Fruscio G."/>
            <person name="Tasca G."/>
            <person name="Ruggiero L."/>
            <person name="Janssens S."/>
            <person name="De Bleecker J."/>
            <person name="Delpech M."/>
            <person name="Musumeci O."/>
            <person name="Toscano A."/>
            <person name="Angelini C."/>
            <person name="Sacconi S."/>
            <person name="Santoro L."/>
            <person name="Ricci E."/>
            <person name="Claes K."/>
            <person name="Politano L."/>
            <person name="Nigro V."/>
        </authorList>
    </citation>
    <scope>VARIANTS LGMDR12 SER-52; SER-54; TRP-58; ILE-87; GLU-93; CYS-143; LYS-202; ALA-206; VAL-231; ASN-259; SER-265; LEU-266; SER-267; LEU-404; 405-GLN--LEU-913 DEL; 421-GLN--LEU-913 DEL; GLY-506; 547-ARG--LEU-913 DEL; GLN-547; ILE-555; SER-578; ILE-618; ASN-701 DEL; SER-714; CYS-758; PRO-781; LEU-796; SER-804; VAL-830; LYS-833; ARG-839 AND LEU-900</scope>
</reference>
<reference key="13">
    <citation type="journal article" date="2015" name="Neurosciences">
        <title>Clinical and genetic features of anoctaminopathy in Saudi Arabia.</title>
        <authorList>
            <person name="Bohlega S."/>
            <person name="Monies D.M."/>
            <person name="Abulaban A.A."/>
            <person name="Murad H.N."/>
            <person name="Alhindi H.N."/>
            <person name="Meyer B.F."/>
        </authorList>
    </citation>
    <scope>VARIANT LGMDR12 TRP-58</scope>
</reference>
<reference key="14">
    <citation type="journal article" date="2016" name="Sci. Rep.">
        <title>Whole exome sequencing links dental tumor to an autosomal-dominant mutation in ANO5 gene associated with gnathodiaphyseal dysplasia and muscle dystrophies.</title>
        <authorList>
            <person name="Andreeva T.V."/>
            <person name="Tyazhelova T.V."/>
            <person name="Rykalina V.N."/>
            <person name="Gusev F.E."/>
            <person name="Goltsov A.Y."/>
            <person name="Zolotareva O.I."/>
            <person name="Aliseichik M.P."/>
            <person name="Borodina T.A."/>
            <person name="Grigorenko A.P."/>
            <person name="Reshetov D.A."/>
            <person name="Ginter E.K."/>
            <person name="Amelina S.S."/>
            <person name="Zinchenko R.A."/>
            <person name="Rogaev E.I."/>
        </authorList>
    </citation>
    <scope>VARIANT GDD TYR-356</scope>
</reference>
<reference key="15">
    <citation type="journal article" date="2020" name="J. Neuromuscul. Dis.">
        <title>Phenotypic Spectrum of Myopathies with Recessive Anoctamin-5 Mutations.</title>
        <authorList>
            <person name="Vazquez J."/>
            <person name="Lefeuvre C."/>
            <person name="Escobar R.E."/>
            <person name="Luna Angulo A.B."/>
            <person name="Miranda Duarte A."/>
            <person name="Delia Hernandez A."/>
            <person name="Brisset M."/>
            <person name="Carlier R.Y."/>
            <person name="Leturcq F."/>
            <person name="Durand-Canard M.C."/>
            <person name="Nicolas G."/>
            <person name="Laforet P."/>
            <person name="Malfatti E."/>
        </authorList>
    </citation>
    <scope>VARIANTS LGMDR12 TRP-58 AND VAL-231</scope>
</reference>
<reference key="16">
    <citation type="journal article" date="2021" name="J. Cell Biol.">
        <title>ANO5 ensures trafficking of annexins in wounded myofibers.</title>
        <authorList>
            <person name="Foltz S.J."/>
            <person name="Cui Y.Y."/>
            <person name="Choo H.J."/>
            <person name="Hartzell H.C."/>
        </authorList>
    </citation>
    <scope>VARIANT LGMDR12 TRP-58</scope>
    <scope>CHARACTERIZATION OF VARIANT LGMDR12 TRP-58</scope>
    <scope>FUNCTION</scope>
</reference>
<keyword id="KW-1003">Cell membrane</keyword>
<keyword id="KW-0225">Disease variant</keyword>
<keyword id="KW-0256">Endoplasmic reticulum</keyword>
<keyword id="KW-0325">Glycoprotein</keyword>
<keyword id="KW-0947">Limb-girdle muscular dystrophy</keyword>
<keyword id="KW-0472">Membrane</keyword>
<keyword id="KW-1065">Osteogenesis imperfecta</keyword>
<keyword id="KW-1267">Proteomics identification</keyword>
<keyword id="KW-1185">Reference proteome</keyword>
<keyword id="KW-0812">Transmembrane</keyword>
<keyword id="KW-1133">Transmembrane helix</keyword>
<protein>
    <recommendedName>
        <fullName>Anoctamin-5</fullName>
    </recommendedName>
    <alternativeName>
        <fullName>Gnathodiaphyseal dysplasia 1 protein</fullName>
    </alternativeName>
    <alternativeName>
        <fullName>Transmembrane protein 16E</fullName>
    </alternativeName>
</protein>
<gene>
    <name type="primary">ANO5</name>
    <name type="synonym">GDD1</name>
    <name type="synonym">TMEM16E</name>
</gene>
<accession>Q75V66</accession>
<organism>
    <name type="scientific">Homo sapiens</name>
    <name type="common">Human</name>
    <dbReference type="NCBI Taxonomy" id="9606"/>
    <lineage>
        <taxon>Eukaryota</taxon>
        <taxon>Metazoa</taxon>
        <taxon>Chordata</taxon>
        <taxon>Craniata</taxon>
        <taxon>Vertebrata</taxon>
        <taxon>Euteleostomi</taxon>
        <taxon>Mammalia</taxon>
        <taxon>Eutheria</taxon>
        <taxon>Euarchontoglires</taxon>
        <taxon>Primates</taxon>
        <taxon>Haplorrhini</taxon>
        <taxon>Catarrhini</taxon>
        <taxon>Hominidae</taxon>
        <taxon>Homo</taxon>
    </lineage>
</organism>
<evidence type="ECO:0000255" key="1"/>
<evidence type="ECO:0000269" key="2">
    <source>
    </source>
</evidence>
<evidence type="ECO:0000269" key="3">
    <source>
    </source>
</evidence>
<evidence type="ECO:0000269" key="4">
    <source>
    </source>
</evidence>
<evidence type="ECO:0000269" key="5">
    <source>
    </source>
</evidence>
<evidence type="ECO:0000269" key="6">
    <source>
    </source>
</evidence>
<evidence type="ECO:0000269" key="7">
    <source>
    </source>
</evidence>
<evidence type="ECO:0000269" key="8">
    <source>
    </source>
</evidence>
<evidence type="ECO:0000269" key="9">
    <source>
    </source>
</evidence>
<evidence type="ECO:0000269" key="10">
    <source>
    </source>
</evidence>
<evidence type="ECO:0000269" key="11">
    <source>
    </source>
</evidence>
<evidence type="ECO:0000269" key="12">
    <source>
    </source>
</evidence>
<evidence type="ECO:0000269" key="13">
    <source>
    </source>
</evidence>
<evidence type="ECO:0000269" key="14">
    <source>
    </source>
</evidence>
<evidence type="ECO:0000305" key="15"/>
<comment type="function">
    <text evidence="4 9 14">Plays a role in plasma membrane repair in a process involving annexins (PubMed:33496727). Does not exhibit calcium-activated chloride channel (CaCC) activity.</text>
</comment>
<comment type="subcellular location">
    <subcellularLocation>
        <location evidence="3">Endoplasmic reticulum membrane</location>
        <topology evidence="1">Multi-pass membrane protein</topology>
    </subcellularLocation>
    <subcellularLocation>
        <location evidence="4 8">Cell membrane</location>
        <topology evidence="1">Multi-pass membrane protein</topology>
    </subcellularLocation>
    <text evidence="3 6">Colocalized with CALR/calreticulin (PubMed:15124103). Shows an intracellular localization according to PubMed:22075693.</text>
</comment>
<comment type="tissue specificity">
    <text evidence="2 3">Highly expressed in brain, heart, kidney, lung, and skeletal muscle. Weakly expressed in bone marrow, fetal liver, placenta, spleen, thymus, osteoblasts and periodontal ligament cells.</text>
</comment>
<comment type="disease" evidence="3 9 12">
    <disease id="DI-01679">
        <name>Gnathodiaphyseal dysplasia</name>
        <acronym>GDD</acronym>
        <description>Rare skeletal syndrome characterized by bone fragility, sclerosis of tubular bones, and cemento-osseous lesions of the jawbone. Patients experience frequent bone fractures caused by trivial accidents in childhood; however the fractures heal normally without bone deformity. The jaw lesions replace the tooth-bearing segments of the maxilla and mandible with fibrous connective tissues, including various amounts of cementum-like calcified mass, sometimes causing facial deformities. Patients also have a propensity for jaw infection and often suffer from purulent osteomyelitis-like symptoms, such as swelling of and pus discharge from the gums, mobility of the teeth, insufficient healing after tooth extraction and exposure of the lesions into the oral cavity.</description>
        <dbReference type="MIM" id="166260"/>
    </disease>
    <text>The disease is caused by variants affecting the gene represented in this entry.</text>
</comment>
<comment type="disease" evidence="5 7 10 11 13 14">
    <disease id="DI-02703">
        <name>Muscular dystrophy, limb-girdle, autosomal recessive 12</name>
        <acronym>LGMDR12</acronym>
        <description>An autosomal recessive degenerative myopathy characterized by proximal weakness, weakness of the hip and shoulder girdles and prominent asymmetrical quadriceps femoris and biceps brachii atrophy.</description>
        <dbReference type="MIM" id="611307"/>
    </disease>
    <text>The disease is caused by variants affecting the gene represented in this entry.</text>
</comment>
<comment type="disease" evidence="5 7">
    <disease id="DI-02704">
        <name>Miyoshi muscular dystrophy 3</name>
        <acronym>MMD3</acronym>
        <description>A late-onset muscular dystrophy characterized by distal muscle weakness of the lower limbs, calf muscle discomfort and weakness, quadriceps atrophy. Muscle weakness and atrophy may be asymmetric.</description>
        <dbReference type="MIM" id="613319"/>
    </disease>
    <text>The disease is caused by variants affecting the gene represented in this entry.</text>
</comment>
<comment type="miscellaneous">
    <text>The term 'anoctamin' was coined because these channels are anion selective and have eight (OCT) transmembrane segments. There is some dissatisfaction in the field with the Ano nomenclature because it is not certain that all the members of this family are anion channels or have the 8-transmembrane topology.</text>
</comment>
<comment type="similarity">
    <text evidence="15">Belongs to the anoctamin family.</text>
</comment>